<dbReference type="EMBL" id="U31783">
    <property type="protein sequence ID" value="AAA79422.1"/>
    <property type="molecule type" value="Genomic_DNA"/>
</dbReference>
<dbReference type="SMR" id="P50802"/>
<dbReference type="Proteomes" id="UP000009158">
    <property type="component" value="Genome"/>
</dbReference>
<dbReference type="GO" id="GO:0030430">
    <property type="term" value="C:host cell cytoplasm"/>
    <property type="evidence" value="ECO:0007669"/>
    <property type="project" value="UniProtKB-SubCell"/>
</dbReference>
<dbReference type="GO" id="GO:0042025">
    <property type="term" value="C:host cell nucleus"/>
    <property type="evidence" value="ECO:0007669"/>
    <property type="project" value="UniProtKB-SubCell"/>
</dbReference>
<dbReference type="GO" id="GO:0003677">
    <property type="term" value="F:DNA binding"/>
    <property type="evidence" value="ECO:0007669"/>
    <property type="project" value="UniProtKB-UniRule"/>
</dbReference>
<dbReference type="GO" id="GO:0008270">
    <property type="term" value="F:zinc ion binding"/>
    <property type="evidence" value="ECO:0007669"/>
    <property type="project" value="UniProtKB-KW"/>
</dbReference>
<dbReference type="GO" id="GO:0006351">
    <property type="term" value="P:DNA-templated transcription"/>
    <property type="evidence" value="ECO:0007669"/>
    <property type="project" value="UniProtKB-UniRule"/>
</dbReference>
<dbReference type="GO" id="GO:0006355">
    <property type="term" value="P:regulation of DNA-templated transcription"/>
    <property type="evidence" value="ECO:0007669"/>
    <property type="project" value="UniProtKB-UniRule"/>
</dbReference>
<dbReference type="GO" id="GO:0052150">
    <property type="term" value="P:symbiont-mediated perturbation of host apoptosis"/>
    <property type="evidence" value="ECO:0007669"/>
    <property type="project" value="UniProtKB-KW"/>
</dbReference>
<dbReference type="GO" id="GO:0039648">
    <property type="term" value="P:symbiont-mediated perturbation of host ubiquitin-like protein modification"/>
    <property type="evidence" value="ECO:0007669"/>
    <property type="project" value="UniProtKB-UniRule"/>
</dbReference>
<dbReference type="GO" id="GO:0052170">
    <property type="term" value="P:symbiont-mediated suppression of host innate immune response"/>
    <property type="evidence" value="ECO:0007669"/>
    <property type="project" value="UniProtKB-KW"/>
</dbReference>
<dbReference type="GO" id="GO:0039502">
    <property type="term" value="P:symbiont-mediated suppression of host type I interferon-mediated signaling pathway"/>
    <property type="evidence" value="ECO:0007669"/>
    <property type="project" value="UniProtKB-UniRule"/>
</dbReference>
<dbReference type="Gene3D" id="3.30.240.40">
    <property type="entry name" value="E6 early regulatory protein"/>
    <property type="match status" value="2"/>
</dbReference>
<dbReference type="HAMAP" id="MF_04006">
    <property type="entry name" value="HPV_E6"/>
    <property type="match status" value="1"/>
</dbReference>
<dbReference type="InterPro" id="IPR001334">
    <property type="entry name" value="E6"/>
</dbReference>
<dbReference type="InterPro" id="IPR038575">
    <property type="entry name" value="E6_sf"/>
</dbReference>
<dbReference type="Pfam" id="PF00518">
    <property type="entry name" value="E6"/>
    <property type="match status" value="1"/>
</dbReference>
<dbReference type="SUPFAM" id="SSF161229">
    <property type="entry name" value="E6 C-terminal domain-like"/>
    <property type="match status" value="2"/>
</dbReference>
<comment type="function">
    <text evidence="1">Plays a major role in the induction and maintenance of cellular transformation. E6 associates with host UBE3A/E6-AP ubiquitin-protein ligase and modulates its activity. Sequesters tumor suppressor TP53 in the host cytoplasm and modulates its activity by interacting with host EP300 that results in the reduction of TP53 acetylation and activation. In turn, apoptosis induced by DNA damage is inhibited. E6 also protects host keratinocytes from apoptosis by mediating the degradation of host BAK1. May also inhibit host immune response.</text>
</comment>
<comment type="subunit">
    <text evidence="1">Forms homodimers. Interacts with ubiquitin-protein ligase UBE3A/E6-AP; this interaction stimulates UBE3A ubiquitin activity. Interacts with host TP53 and EP300; this interaction inhibits TP53 activity.</text>
</comment>
<comment type="subcellular location">
    <subcellularLocation>
        <location evidence="1">Host cytoplasm</location>
    </subcellularLocation>
    <subcellularLocation>
        <location evidence="1">Host nucleus</location>
    </subcellularLocation>
</comment>
<comment type="miscellaneous">
    <text evidence="1">Belongs to the low risk human alphapapillomavirus family. The cancer-causing human papillomavirus E6 protein has a unique carboxy terminal PDZ domain containing substrate but low risk E6s do not possess this domain.</text>
</comment>
<comment type="similarity">
    <text evidence="2">Belongs to the papillomaviridae E6 protein family.</text>
</comment>
<reference key="1">
    <citation type="submission" date="1995-10" db="EMBL/GenBank/DDBJ databases">
        <authorList>
            <person name="Delius H."/>
        </authorList>
    </citation>
    <scope>NUCLEOTIDE SEQUENCE [GENOMIC DNA]</scope>
</reference>
<protein>
    <recommendedName>
        <fullName evidence="1">Protein E6</fullName>
    </recommendedName>
</protein>
<proteinExistence type="inferred from homology"/>
<organismHost>
    <name type="scientific">Homo sapiens</name>
    <name type="common">Human</name>
    <dbReference type="NCBI Taxonomy" id="9606"/>
</organismHost>
<name>VE6_HPV28</name>
<keyword id="KW-0010">Activator</keyword>
<keyword id="KW-0238">DNA-binding</keyword>
<keyword id="KW-0244">Early protein</keyword>
<keyword id="KW-1035">Host cytoplasm</keyword>
<keyword id="KW-1048">Host nucleus</keyword>
<keyword id="KW-0945">Host-virus interaction</keyword>
<keyword id="KW-1090">Inhibition of host innate immune response by virus</keyword>
<keyword id="KW-0479">Metal-binding</keyword>
<keyword id="KW-1119">Modulation of host cell apoptosis by virus</keyword>
<keyword id="KW-0804">Transcription</keyword>
<keyword id="KW-0805">Transcription regulation</keyword>
<keyword id="KW-0899">Viral immunoevasion</keyword>
<keyword id="KW-0862">Zinc</keyword>
<keyword id="KW-0863">Zinc-finger</keyword>
<sequence>MDDQRPKNIFLLCRDSGISFDDLRLHCIFCAKVLTTAELSAFALRELNVVWRTGAPYGACARCLLLQGIVRRLKHWDYSLYVEGVEEETKQSIDTQQVRCYMCHKPLVKEEKDRHRNERRRLHCIAGYWRGSCQYCWLRCTVRIPQ</sequence>
<evidence type="ECO:0000255" key="1">
    <source>
        <dbReference type="HAMAP-Rule" id="MF_04006"/>
    </source>
</evidence>
<evidence type="ECO:0000305" key="2"/>
<feature type="chain" id="PRO_0000133348" description="Protein E6">
    <location>
        <begin position="1"/>
        <end position="146"/>
    </location>
</feature>
<feature type="zinc finger region" evidence="1">
    <location>
        <begin position="27"/>
        <end position="63"/>
    </location>
</feature>
<feature type="zinc finger region" evidence="1">
    <location>
        <begin position="100"/>
        <end position="136"/>
    </location>
</feature>
<accession>P50802</accession>
<organism>
    <name type="scientific">Human papillomavirus 28</name>
    <dbReference type="NCBI Taxonomy" id="37111"/>
    <lineage>
        <taxon>Viruses</taxon>
        <taxon>Monodnaviria</taxon>
        <taxon>Shotokuvirae</taxon>
        <taxon>Cossaviricota</taxon>
        <taxon>Papovaviricetes</taxon>
        <taxon>Zurhausenvirales</taxon>
        <taxon>Papillomaviridae</taxon>
        <taxon>Firstpapillomavirinae</taxon>
        <taxon>Alphapapillomavirus</taxon>
        <taxon>Alphapapillomavirus 2</taxon>
    </lineage>
</organism>
<gene>
    <name evidence="1" type="primary">E6</name>
</gene>